<gene>
    <name evidence="1" type="primary">argE</name>
    <name type="ordered locus">BU047</name>
</gene>
<keyword id="KW-0028">Amino-acid biosynthesis</keyword>
<keyword id="KW-0055">Arginine biosynthesis</keyword>
<keyword id="KW-0170">Cobalt</keyword>
<keyword id="KW-0963">Cytoplasm</keyword>
<keyword id="KW-0378">Hydrolase</keyword>
<keyword id="KW-0479">Metal-binding</keyword>
<keyword id="KW-1185">Reference proteome</keyword>
<keyword id="KW-0862">Zinc</keyword>
<comment type="function">
    <text evidence="1">Catalyzes the hydrolysis of the amide bond of N(2)-acetylated L-amino acids. Cleaves the acetyl group from N-acetyl-L-ornithine to form L-ornithine, an intermediate in L-arginine biosynthesis pathway, and a branchpoint in the synthesis of polyamines.</text>
</comment>
<comment type="catalytic activity">
    <reaction evidence="1">
        <text>N(2)-acetyl-L-ornithine + H2O = L-ornithine + acetate</text>
        <dbReference type="Rhea" id="RHEA:15941"/>
        <dbReference type="ChEBI" id="CHEBI:15377"/>
        <dbReference type="ChEBI" id="CHEBI:30089"/>
        <dbReference type="ChEBI" id="CHEBI:46911"/>
        <dbReference type="ChEBI" id="CHEBI:57805"/>
        <dbReference type="EC" id="3.5.1.16"/>
    </reaction>
</comment>
<comment type="cofactor">
    <cofactor evidence="1">
        <name>Zn(2+)</name>
        <dbReference type="ChEBI" id="CHEBI:29105"/>
    </cofactor>
    <cofactor evidence="1">
        <name>Co(2+)</name>
        <dbReference type="ChEBI" id="CHEBI:48828"/>
    </cofactor>
    <text evidence="1">Binds 2 Zn(2+) or Co(2+) ions per subunit.</text>
</comment>
<comment type="cofactor">
    <cofactor evidence="1">
        <name>glutathione</name>
        <dbReference type="ChEBI" id="CHEBI:57925"/>
    </cofactor>
</comment>
<comment type="pathway">
    <text evidence="1">Amino-acid biosynthesis; L-arginine biosynthesis; L-ornithine from N(2)-acetyl-L-ornithine (linear): step 1/1.</text>
</comment>
<comment type="subunit">
    <text evidence="1">Homodimer.</text>
</comment>
<comment type="subcellular location">
    <subcellularLocation>
        <location evidence="1">Cytoplasm</location>
    </subcellularLocation>
</comment>
<comment type="similarity">
    <text evidence="1 2">Belongs to the peptidase M20A family. ArgE subfamily.</text>
</comment>
<name>ARGE_BUCAI</name>
<protein>
    <recommendedName>
        <fullName evidence="1">Acetylornithine deacetylase</fullName>
        <shortName evidence="1">AO</shortName>
        <shortName evidence="1">Acetylornithinase</shortName>
        <ecNumber evidence="1">3.5.1.16</ecNumber>
    </recommendedName>
    <alternativeName>
        <fullName evidence="1">N-acetylornithinase</fullName>
        <shortName evidence="1">NAO</shortName>
    </alternativeName>
</protein>
<sequence length="381" mass="43045">MIRKIPSFIEVYKSLIQIPTISSNNKLLDQSNKNFIDLLSNYFSDLNFSVKNYQIPHTDKYNMLACVGSGNGGLLLSGHSDTVDFDEKKWTKDPFKLTETNNKFYGLGAVDMKGFFALILEVISSINIKKINKPIYILATANEETDMSGARNFIQSTIIKPDCIIIGEPTSLKLINAHKGHMSYSIKVIGDTGHSSNPDHGVNSIEIMHDVIRSLLILKKYFKEEYQHPNFSIPYPTMNLSSIHGGSAINRICPLCILNFEIRPIPGLTLTQIEIVIKEKLETIMKKWSHRIFIKKLFSSVPAYECPHNSGTIKIVEKLCQLNSAAVNYCTEAPFLQRIAPTLILGPGSIEQAHQPDEYLEHYFIQPTKNIITKLINKFCY</sequence>
<evidence type="ECO:0000255" key="1">
    <source>
        <dbReference type="HAMAP-Rule" id="MF_01108"/>
    </source>
</evidence>
<evidence type="ECO:0000305" key="2"/>
<reference key="1">
    <citation type="journal article" date="2000" name="Nature">
        <title>Genome sequence of the endocellular bacterial symbiont of aphids Buchnera sp. APS.</title>
        <authorList>
            <person name="Shigenobu S."/>
            <person name="Watanabe H."/>
            <person name="Hattori M."/>
            <person name="Sakaki Y."/>
            <person name="Ishikawa H."/>
        </authorList>
    </citation>
    <scope>NUCLEOTIDE SEQUENCE [LARGE SCALE GENOMIC DNA]</scope>
    <source>
        <strain>APS</strain>
    </source>
</reference>
<accession>P57155</accession>
<proteinExistence type="inferred from homology"/>
<dbReference type="EC" id="3.5.1.16" evidence="1"/>
<dbReference type="EMBL" id="BA000003">
    <property type="protein sequence ID" value="BAB12770.1"/>
    <property type="molecule type" value="Genomic_DNA"/>
</dbReference>
<dbReference type="RefSeq" id="NP_239884.1">
    <property type="nucleotide sequence ID" value="NC_002528.1"/>
</dbReference>
<dbReference type="RefSeq" id="WP_010895917.1">
    <property type="nucleotide sequence ID" value="NC_002528.1"/>
</dbReference>
<dbReference type="SMR" id="P57155"/>
<dbReference type="STRING" id="563178.BUAP5A_046"/>
<dbReference type="EnsemblBacteria" id="BAB12770">
    <property type="protein sequence ID" value="BAB12770"/>
    <property type="gene ID" value="BAB12770"/>
</dbReference>
<dbReference type="KEGG" id="buc:BU047"/>
<dbReference type="PATRIC" id="fig|107806.10.peg.56"/>
<dbReference type="eggNOG" id="COG0624">
    <property type="taxonomic scope" value="Bacteria"/>
</dbReference>
<dbReference type="HOGENOM" id="CLU_021802_2_4_6"/>
<dbReference type="UniPathway" id="UPA00068">
    <property type="reaction ID" value="UER00110"/>
</dbReference>
<dbReference type="Proteomes" id="UP000001806">
    <property type="component" value="Chromosome"/>
</dbReference>
<dbReference type="GO" id="GO:0005737">
    <property type="term" value="C:cytoplasm"/>
    <property type="evidence" value="ECO:0007669"/>
    <property type="project" value="UniProtKB-SubCell"/>
</dbReference>
<dbReference type="GO" id="GO:0008777">
    <property type="term" value="F:acetylornithine deacetylase activity"/>
    <property type="evidence" value="ECO:0007669"/>
    <property type="project" value="UniProtKB-UniRule"/>
</dbReference>
<dbReference type="GO" id="GO:0008270">
    <property type="term" value="F:zinc ion binding"/>
    <property type="evidence" value="ECO:0007669"/>
    <property type="project" value="UniProtKB-UniRule"/>
</dbReference>
<dbReference type="GO" id="GO:0006526">
    <property type="term" value="P:L-arginine biosynthetic process"/>
    <property type="evidence" value="ECO:0007669"/>
    <property type="project" value="UniProtKB-UniRule"/>
</dbReference>
<dbReference type="CDD" id="cd03894">
    <property type="entry name" value="M20_ArgE"/>
    <property type="match status" value="1"/>
</dbReference>
<dbReference type="FunFam" id="3.30.70.360:FF:000003">
    <property type="entry name" value="Acetylornithine deacetylase"/>
    <property type="match status" value="1"/>
</dbReference>
<dbReference type="Gene3D" id="3.30.70.360">
    <property type="match status" value="1"/>
</dbReference>
<dbReference type="Gene3D" id="3.40.630.10">
    <property type="entry name" value="Zn peptidases"/>
    <property type="match status" value="1"/>
</dbReference>
<dbReference type="HAMAP" id="MF_01108">
    <property type="entry name" value="ArgE"/>
    <property type="match status" value="1"/>
</dbReference>
<dbReference type="InterPro" id="IPR010169">
    <property type="entry name" value="AcOrn-deacetyl"/>
</dbReference>
<dbReference type="InterPro" id="IPR001261">
    <property type="entry name" value="ArgE/DapE_CS"/>
</dbReference>
<dbReference type="InterPro" id="IPR036264">
    <property type="entry name" value="Bact_exopeptidase_dim_dom"/>
</dbReference>
<dbReference type="InterPro" id="IPR002933">
    <property type="entry name" value="Peptidase_M20"/>
</dbReference>
<dbReference type="InterPro" id="IPR011650">
    <property type="entry name" value="Peptidase_M20_dimer"/>
</dbReference>
<dbReference type="InterPro" id="IPR050072">
    <property type="entry name" value="Peptidase_M20A"/>
</dbReference>
<dbReference type="NCBIfam" id="TIGR01892">
    <property type="entry name" value="AcOrn-deacetyl"/>
    <property type="match status" value="1"/>
</dbReference>
<dbReference type="NCBIfam" id="NF003474">
    <property type="entry name" value="PRK05111.1"/>
    <property type="match status" value="1"/>
</dbReference>
<dbReference type="PANTHER" id="PTHR43808">
    <property type="entry name" value="ACETYLORNITHINE DEACETYLASE"/>
    <property type="match status" value="1"/>
</dbReference>
<dbReference type="PANTHER" id="PTHR43808:SF1">
    <property type="entry name" value="ACETYLORNITHINE DEACETYLASE"/>
    <property type="match status" value="1"/>
</dbReference>
<dbReference type="Pfam" id="PF07687">
    <property type="entry name" value="M20_dimer"/>
    <property type="match status" value="1"/>
</dbReference>
<dbReference type="Pfam" id="PF01546">
    <property type="entry name" value="Peptidase_M20"/>
    <property type="match status" value="1"/>
</dbReference>
<dbReference type="SUPFAM" id="SSF55031">
    <property type="entry name" value="Bacterial exopeptidase dimerisation domain"/>
    <property type="match status" value="1"/>
</dbReference>
<dbReference type="SUPFAM" id="SSF53187">
    <property type="entry name" value="Zn-dependent exopeptidases"/>
    <property type="match status" value="1"/>
</dbReference>
<dbReference type="PROSITE" id="PS00758">
    <property type="entry name" value="ARGE_DAPE_CPG2_1"/>
    <property type="match status" value="1"/>
</dbReference>
<dbReference type="PROSITE" id="PS00759">
    <property type="entry name" value="ARGE_DAPE_CPG2_2"/>
    <property type="match status" value="1"/>
</dbReference>
<feature type="chain" id="PRO_0000185238" description="Acetylornithine deacetylase">
    <location>
        <begin position="1"/>
        <end position="381"/>
    </location>
</feature>
<feature type="active site" evidence="1">
    <location>
        <position position="81"/>
    </location>
</feature>
<feature type="active site" evidence="1">
    <location>
        <position position="143"/>
    </location>
</feature>
<feature type="binding site" evidence="1">
    <location>
        <position position="79"/>
    </location>
    <ligand>
        <name>Zn(2+)</name>
        <dbReference type="ChEBI" id="CHEBI:29105"/>
        <label>1</label>
    </ligand>
</feature>
<feature type="binding site" evidence="1">
    <location>
        <position position="111"/>
    </location>
    <ligand>
        <name>Zn(2+)</name>
        <dbReference type="ChEBI" id="CHEBI:29105"/>
        <label>1</label>
    </ligand>
</feature>
<feature type="binding site" evidence="1">
    <location>
        <position position="111"/>
    </location>
    <ligand>
        <name>Zn(2+)</name>
        <dbReference type="ChEBI" id="CHEBI:29105"/>
        <label>2</label>
    </ligand>
</feature>
<feature type="binding site" evidence="1">
    <location>
        <position position="144"/>
    </location>
    <ligand>
        <name>Zn(2+)</name>
        <dbReference type="ChEBI" id="CHEBI:29105"/>
        <label>2</label>
    </ligand>
</feature>
<feature type="binding site" evidence="1">
    <location>
        <position position="168"/>
    </location>
    <ligand>
        <name>Zn(2+)</name>
        <dbReference type="ChEBI" id="CHEBI:29105"/>
        <label>1</label>
    </ligand>
</feature>
<feature type="binding site" evidence="1">
    <location>
        <position position="354"/>
    </location>
    <ligand>
        <name>Zn(2+)</name>
        <dbReference type="ChEBI" id="CHEBI:29105"/>
        <label>2</label>
    </ligand>
</feature>
<organism>
    <name type="scientific">Buchnera aphidicola subsp. Acyrthosiphon pisum (strain APS)</name>
    <name type="common">Acyrthosiphon pisum symbiotic bacterium</name>
    <dbReference type="NCBI Taxonomy" id="107806"/>
    <lineage>
        <taxon>Bacteria</taxon>
        <taxon>Pseudomonadati</taxon>
        <taxon>Pseudomonadota</taxon>
        <taxon>Gammaproteobacteria</taxon>
        <taxon>Enterobacterales</taxon>
        <taxon>Erwiniaceae</taxon>
        <taxon>Buchnera</taxon>
    </lineage>
</organism>